<dbReference type="EC" id="2.1.3.15" evidence="1"/>
<dbReference type="EMBL" id="CP000825">
    <property type="protein sequence ID" value="ABV50494.1"/>
    <property type="molecule type" value="Genomic_DNA"/>
</dbReference>
<dbReference type="RefSeq" id="WP_012007592.1">
    <property type="nucleotide sequence ID" value="NC_009840.1"/>
</dbReference>
<dbReference type="SMR" id="A8G4G3"/>
<dbReference type="STRING" id="93060.P9215_08791"/>
<dbReference type="KEGG" id="pmh:P9215_08791"/>
<dbReference type="eggNOG" id="COG0777">
    <property type="taxonomic scope" value="Bacteria"/>
</dbReference>
<dbReference type="HOGENOM" id="CLU_015486_1_1_3"/>
<dbReference type="OrthoDB" id="9772975at2"/>
<dbReference type="UniPathway" id="UPA00655">
    <property type="reaction ID" value="UER00711"/>
</dbReference>
<dbReference type="Proteomes" id="UP000002014">
    <property type="component" value="Chromosome"/>
</dbReference>
<dbReference type="GO" id="GO:0009317">
    <property type="term" value="C:acetyl-CoA carboxylase complex"/>
    <property type="evidence" value="ECO:0007669"/>
    <property type="project" value="InterPro"/>
</dbReference>
<dbReference type="GO" id="GO:0003989">
    <property type="term" value="F:acetyl-CoA carboxylase activity"/>
    <property type="evidence" value="ECO:0007669"/>
    <property type="project" value="InterPro"/>
</dbReference>
<dbReference type="GO" id="GO:0005524">
    <property type="term" value="F:ATP binding"/>
    <property type="evidence" value="ECO:0007669"/>
    <property type="project" value="UniProtKB-KW"/>
</dbReference>
<dbReference type="GO" id="GO:0016743">
    <property type="term" value="F:carboxyl- or carbamoyltransferase activity"/>
    <property type="evidence" value="ECO:0007669"/>
    <property type="project" value="UniProtKB-UniRule"/>
</dbReference>
<dbReference type="GO" id="GO:0008270">
    <property type="term" value="F:zinc ion binding"/>
    <property type="evidence" value="ECO:0007669"/>
    <property type="project" value="UniProtKB-UniRule"/>
</dbReference>
<dbReference type="GO" id="GO:0006633">
    <property type="term" value="P:fatty acid biosynthetic process"/>
    <property type="evidence" value="ECO:0007669"/>
    <property type="project" value="UniProtKB-KW"/>
</dbReference>
<dbReference type="GO" id="GO:2001295">
    <property type="term" value="P:malonyl-CoA biosynthetic process"/>
    <property type="evidence" value="ECO:0007669"/>
    <property type="project" value="UniProtKB-UniRule"/>
</dbReference>
<dbReference type="Gene3D" id="3.90.226.10">
    <property type="entry name" value="2-enoyl-CoA Hydratase, Chain A, domain 1"/>
    <property type="match status" value="1"/>
</dbReference>
<dbReference type="HAMAP" id="MF_01395">
    <property type="entry name" value="AcetylCoA_CT_beta"/>
    <property type="match status" value="1"/>
</dbReference>
<dbReference type="InterPro" id="IPR034733">
    <property type="entry name" value="AcCoA_carboxyl_beta"/>
</dbReference>
<dbReference type="InterPro" id="IPR000438">
    <property type="entry name" value="Acetyl_CoA_COase_Trfase_b_su"/>
</dbReference>
<dbReference type="InterPro" id="IPR029045">
    <property type="entry name" value="ClpP/crotonase-like_dom_sf"/>
</dbReference>
<dbReference type="InterPro" id="IPR011762">
    <property type="entry name" value="COA_CT_N"/>
</dbReference>
<dbReference type="InterPro" id="IPR041010">
    <property type="entry name" value="Znf-ACC"/>
</dbReference>
<dbReference type="NCBIfam" id="TIGR00515">
    <property type="entry name" value="accD"/>
    <property type="match status" value="1"/>
</dbReference>
<dbReference type="PANTHER" id="PTHR42995">
    <property type="entry name" value="ACETYL-COENZYME A CARBOXYLASE CARBOXYL TRANSFERASE SUBUNIT BETA, CHLOROPLASTIC"/>
    <property type="match status" value="1"/>
</dbReference>
<dbReference type="PANTHER" id="PTHR42995:SF5">
    <property type="entry name" value="ACETYL-COENZYME A CARBOXYLASE CARBOXYL TRANSFERASE SUBUNIT BETA, CHLOROPLASTIC"/>
    <property type="match status" value="1"/>
</dbReference>
<dbReference type="Pfam" id="PF01039">
    <property type="entry name" value="Carboxyl_trans"/>
    <property type="match status" value="1"/>
</dbReference>
<dbReference type="Pfam" id="PF17848">
    <property type="entry name" value="Zn_ribbon_ACC"/>
    <property type="match status" value="1"/>
</dbReference>
<dbReference type="PRINTS" id="PR01070">
    <property type="entry name" value="ACCCTRFRASEB"/>
</dbReference>
<dbReference type="SUPFAM" id="SSF52096">
    <property type="entry name" value="ClpP/crotonase"/>
    <property type="match status" value="1"/>
</dbReference>
<dbReference type="PROSITE" id="PS50980">
    <property type="entry name" value="COA_CT_NTER"/>
    <property type="match status" value="1"/>
</dbReference>
<proteinExistence type="inferred from homology"/>
<keyword id="KW-0067">ATP-binding</keyword>
<keyword id="KW-0963">Cytoplasm</keyword>
<keyword id="KW-0275">Fatty acid biosynthesis</keyword>
<keyword id="KW-0276">Fatty acid metabolism</keyword>
<keyword id="KW-0444">Lipid biosynthesis</keyword>
<keyword id="KW-0443">Lipid metabolism</keyword>
<keyword id="KW-0479">Metal-binding</keyword>
<keyword id="KW-0547">Nucleotide-binding</keyword>
<keyword id="KW-0808">Transferase</keyword>
<keyword id="KW-0862">Zinc</keyword>
<keyword id="KW-0863">Zinc-finger</keyword>
<accession>A8G4G3</accession>
<evidence type="ECO:0000255" key="1">
    <source>
        <dbReference type="HAMAP-Rule" id="MF_01395"/>
    </source>
</evidence>
<evidence type="ECO:0000255" key="2">
    <source>
        <dbReference type="PROSITE-ProRule" id="PRU01136"/>
    </source>
</evidence>
<gene>
    <name evidence="1" type="primary">accD</name>
    <name type="ordered locus">P9215_08791</name>
</gene>
<protein>
    <recommendedName>
        <fullName evidence="1">Acetyl-coenzyme A carboxylase carboxyl transferase subunit beta</fullName>
        <shortName evidence="1">ACCase subunit beta</shortName>
        <shortName evidence="1">Acetyl-CoA carboxylase carboxyltransferase subunit beta</shortName>
        <ecNumber evidence="1">2.1.3.15</ecNumber>
    </recommendedName>
</protein>
<sequence>MSLIDWFAARRKDQFVGKVSQDTDEGDGLWVKCSECSQVAYRKDLISNFNVCSNCNHHNRINSDERINIVADKDSFKEFDSSLSPTDPLGFKDRRSYADRIKDSQTSTGLRDGVITGFCSVNSMPLALAVMDFRFMGGSMGSVVGEKITRIIERATKKNYPILIVCASGGARMQEGMLSLMQMAKISGALKKHKEKNLLYMPLLTHPTTGGVTASFAMLGDLILAEPKALIGFAGRRVIEQTLREKLPDNFQTAEYLLEHGFVDVIVKRRELKTTLTKILKIHGVNELVEANI</sequence>
<reference key="1">
    <citation type="journal article" date="2007" name="PLoS Genet.">
        <title>Patterns and implications of gene gain and loss in the evolution of Prochlorococcus.</title>
        <authorList>
            <person name="Kettler G.C."/>
            <person name="Martiny A.C."/>
            <person name="Huang K."/>
            <person name="Zucker J."/>
            <person name="Coleman M.L."/>
            <person name="Rodrigue S."/>
            <person name="Chen F."/>
            <person name="Lapidus A."/>
            <person name="Ferriera S."/>
            <person name="Johnson J."/>
            <person name="Steglich C."/>
            <person name="Church G.M."/>
            <person name="Richardson P."/>
            <person name="Chisholm S.W."/>
        </authorList>
    </citation>
    <scope>NUCLEOTIDE SEQUENCE [LARGE SCALE GENOMIC DNA]</scope>
    <source>
        <strain>MIT 9215</strain>
    </source>
</reference>
<name>ACCD_PROM2</name>
<organism>
    <name type="scientific">Prochlorococcus marinus (strain MIT 9215)</name>
    <dbReference type="NCBI Taxonomy" id="93060"/>
    <lineage>
        <taxon>Bacteria</taxon>
        <taxon>Bacillati</taxon>
        <taxon>Cyanobacteriota</taxon>
        <taxon>Cyanophyceae</taxon>
        <taxon>Synechococcales</taxon>
        <taxon>Prochlorococcaceae</taxon>
        <taxon>Prochlorococcus</taxon>
    </lineage>
</organism>
<comment type="function">
    <text evidence="1">Component of the acetyl coenzyme A carboxylase (ACC) complex. Biotin carboxylase (BC) catalyzes the carboxylation of biotin on its carrier protein (BCCP) and then the CO(2) group is transferred by the transcarboxylase to acetyl-CoA to form malonyl-CoA.</text>
</comment>
<comment type="catalytic activity">
    <reaction evidence="1">
        <text>N(6)-carboxybiotinyl-L-lysyl-[protein] + acetyl-CoA = N(6)-biotinyl-L-lysyl-[protein] + malonyl-CoA</text>
        <dbReference type="Rhea" id="RHEA:54728"/>
        <dbReference type="Rhea" id="RHEA-COMP:10505"/>
        <dbReference type="Rhea" id="RHEA-COMP:10506"/>
        <dbReference type="ChEBI" id="CHEBI:57288"/>
        <dbReference type="ChEBI" id="CHEBI:57384"/>
        <dbReference type="ChEBI" id="CHEBI:83144"/>
        <dbReference type="ChEBI" id="CHEBI:83145"/>
        <dbReference type="EC" id="2.1.3.15"/>
    </reaction>
</comment>
<comment type="cofactor">
    <cofactor evidence="1">
        <name>Zn(2+)</name>
        <dbReference type="ChEBI" id="CHEBI:29105"/>
    </cofactor>
    <text evidence="1">Binds 1 zinc ion per subunit.</text>
</comment>
<comment type="pathway">
    <text evidence="1">Lipid metabolism; malonyl-CoA biosynthesis; malonyl-CoA from acetyl-CoA: step 1/1.</text>
</comment>
<comment type="subunit">
    <text evidence="1">Acetyl-CoA carboxylase is a heterohexamer composed of biotin carboxyl carrier protein (AccB), biotin carboxylase (AccC) and two subunits each of ACCase subunit alpha (AccA) and ACCase subunit beta (AccD).</text>
</comment>
<comment type="subcellular location">
    <subcellularLocation>
        <location evidence="1">Cytoplasm</location>
    </subcellularLocation>
</comment>
<comment type="similarity">
    <text evidence="1">Belongs to the AccD/PCCB family.</text>
</comment>
<feature type="chain" id="PRO_0000359020" description="Acetyl-coenzyme A carboxylase carboxyl transferase subunit beta">
    <location>
        <begin position="1"/>
        <end position="293"/>
    </location>
</feature>
<feature type="domain" description="CoA carboxyltransferase N-terminal" evidence="2">
    <location>
        <begin position="29"/>
        <end position="293"/>
    </location>
</feature>
<feature type="zinc finger region" description="C4-type" evidence="1">
    <location>
        <begin position="33"/>
        <end position="55"/>
    </location>
</feature>
<feature type="binding site" evidence="1">
    <location>
        <position position="33"/>
    </location>
    <ligand>
        <name>Zn(2+)</name>
        <dbReference type="ChEBI" id="CHEBI:29105"/>
    </ligand>
</feature>
<feature type="binding site" evidence="1">
    <location>
        <position position="36"/>
    </location>
    <ligand>
        <name>Zn(2+)</name>
        <dbReference type="ChEBI" id="CHEBI:29105"/>
    </ligand>
</feature>
<feature type="binding site" evidence="1">
    <location>
        <position position="52"/>
    </location>
    <ligand>
        <name>Zn(2+)</name>
        <dbReference type="ChEBI" id="CHEBI:29105"/>
    </ligand>
</feature>
<feature type="binding site" evidence="1">
    <location>
        <position position="55"/>
    </location>
    <ligand>
        <name>Zn(2+)</name>
        <dbReference type="ChEBI" id="CHEBI:29105"/>
    </ligand>
</feature>